<accession>Q2RHY7</accession>
<organism>
    <name type="scientific">Moorella thermoacetica (strain ATCC 39073 / JCM 9320)</name>
    <dbReference type="NCBI Taxonomy" id="264732"/>
    <lineage>
        <taxon>Bacteria</taxon>
        <taxon>Bacillati</taxon>
        <taxon>Bacillota</taxon>
        <taxon>Clostridia</taxon>
        <taxon>Moorellales</taxon>
        <taxon>Moorellaceae</taxon>
        <taxon>Moorella</taxon>
    </lineage>
</organism>
<reference key="1">
    <citation type="journal article" date="2008" name="Environ. Microbiol.">
        <title>The complete genome sequence of Moorella thermoacetica (f. Clostridium thermoaceticum).</title>
        <authorList>
            <person name="Pierce E."/>
            <person name="Xie G."/>
            <person name="Barabote R.D."/>
            <person name="Saunders E."/>
            <person name="Han C.S."/>
            <person name="Detter J.C."/>
            <person name="Richardson P."/>
            <person name="Brettin T.S."/>
            <person name="Das A."/>
            <person name="Ljungdahl L.G."/>
            <person name="Ragsdale S.W."/>
        </authorList>
    </citation>
    <scope>NUCLEOTIDE SEQUENCE [LARGE SCALE GENOMIC DNA]</scope>
    <source>
        <strain>ATCC 39073 / JCM 9320</strain>
    </source>
</reference>
<evidence type="ECO:0000255" key="1">
    <source>
        <dbReference type="HAMAP-Rule" id="MF_00144"/>
    </source>
</evidence>
<sequence>MVAMSGGVDSSTAAALLKEAGYEVIGVTLALWPEDTPPPPGETGCCSLKAVDDARRVANILDIPYYVLNFRDLFEREVIDYFIASYLEGETPNPCIACNRRIKFGALLAKARALGIDYIATGHYARRWYDKEKGRYLLARGRDAGKDQSYALYTFTQEQLAHTLLPLGDYTKVEVREIAARYGLPVARKAESQEICFVTEGDYRDYIQSRAREKIKPGPILDTRGRVLGQHRGLPFYTIGQRKGLGLALGKPCFVVALDPERNAVIVGDKEDLERRVLYARDNNYILWGELPGKARVTARIRYRAPEAAATWHPLAGGRARLEFDEPQRAITPGQAVVYYQGDLVVGGGTIESVAQI</sequence>
<feature type="chain" id="PRO_0000349702" description="tRNA-specific 2-thiouridylase MnmA">
    <location>
        <begin position="1"/>
        <end position="357"/>
    </location>
</feature>
<feature type="region of interest" description="Interaction with tRNA" evidence="1">
    <location>
        <begin position="146"/>
        <end position="148"/>
    </location>
</feature>
<feature type="region of interest" description="Interaction with tRNA" evidence="1">
    <location>
        <begin position="302"/>
        <end position="303"/>
    </location>
</feature>
<feature type="active site" description="Nucleophile" evidence="1">
    <location>
        <position position="98"/>
    </location>
</feature>
<feature type="active site" description="Cysteine persulfide intermediate" evidence="1">
    <location>
        <position position="196"/>
    </location>
</feature>
<feature type="binding site" evidence="1">
    <location>
        <begin position="3"/>
        <end position="10"/>
    </location>
    <ligand>
        <name>ATP</name>
        <dbReference type="ChEBI" id="CHEBI:30616"/>
    </ligand>
</feature>
<feature type="binding site" evidence="1">
    <location>
        <position position="29"/>
    </location>
    <ligand>
        <name>ATP</name>
        <dbReference type="ChEBI" id="CHEBI:30616"/>
    </ligand>
</feature>
<feature type="binding site" evidence="1">
    <location>
        <position position="122"/>
    </location>
    <ligand>
        <name>ATP</name>
        <dbReference type="ChEBI" id="CHEBI:30616"/>
    </ligand>
</feature>
<feature type="site" description="Interaction with tRNA" evidence="1">
    <location>
        <position position="123"/>
    </location>
</feature>
<feature type="site" description="Interaction with tRNA" evidence="1">
    <location>
        <position position="335"/>
    </location>
</feature>
<feature type="disulfide bond" description="Alternate" evidence="1">
    <location>
        <begin position="98"/>
        <end position="196"/>
    </location>
</feature>
<proteinExistence type="inferred from homology"/>
<comment type="function">
    <text evidence="1">Catalyzes the 2-thiolation of uridine at the wobble position (U34) of tRNA, leading to the formation of s(2)U34.</text>
</comment>
<comment type="catalytic activity">
    <reaction evidence="1">
        <text>S-sulfanyl-L-cysteinyl-[protein] + uridine(34) in tRNA + AH2 + ATP = 2-thiouridine(34) in tRNA + L-cysteinyl-[protein] + A + AMP + diphosphate + H(+)</text>
        <dbReference type="Rhea" id="RHEA:47032"/>
        <dbReference type="Rhea" id="RHEA-COMP:10131"/>
        <dbReference type="Rhea" id="RHEA-COMP:11726"/>
        <dbReference type="Rhea" id="RHEA-COMP:11727"/>
        <dbReference type="Rhea" id="RHEA-COMP:11728"/>
        <dbReference type="ChEBI" id="CHEBI:13193"/>
        <dbReference type="ChEBI" id="CHEBI:15378"/>
        <dbReference type="ChEBI" id="CHEBI:17499"/>
        <dbReference type="ChEBI" id="CHEBI:29950"/>
        <dbReference type="ChEBI" id="CHEBI:30616"/>
        <dbReference type="ChEBI" id="CHEBI:33019"/>
        <dbReference type="ChEBI" id="CHEBI:61963"/>
        <dbReference type="ChEBI" id="CHEBI:65315"/>
        <dbReference type="ChEBI" id="CHEBI:87170"/>
        <dbReference type="ChEBI" id="CHEBI:456215"/>
        <dbReference type="EC" id="2.8.1.13"/>
    </reaction>
</comment>
<comment type="subcellular location">
    <subcellularLocation>
        <location evidence="1">Cytoplasm</location>
    </subcellularLocation>
</comment>
<comment type="similarity">
    <text evidence="1">Belongs to the MnmA/TRMU family.</text>
</comment>
<dbReference type="EC" id="2.8.1.13" evidence="1"/>
<dbReference type="EMBL" id="CP000232">
    <property type="protein sequence ID" value="ABC19952.1"/>
    <property type="molecule type" value="Genomic_DNA"/>
</dbReference>
<dbReference type="RefSeq" id="YP_430495.1">
    <property type="nucleotide sequence ID" value="NC_007644.1"/>
</dbReference>
<dbReference type="SMR" id="Q2RHY7"/>
<dbReference type="STRING" id="264732.Moth_1650"/>
<dbReference type="EnsemblBacteria" id="ABC19952">
    <property type="protein sequence ID" value="ABC19952"/>
    <property type="gene ID" value="Moth_1650"/>
</dbReference>
<dbReference type="KEGG" id="mta:Moth_1650"/>
<dbReference type="PATRIC" id="fig|264732.11.peg.1789"/>
<dbReference type="eggNOG" id="COG0482">
    <property type="taxonomic scope" value="Bacteria"/>
</dbReference>
<dbReference type="HOGENOM" id="CLU_035188_0_0_9"/>
<dbReference type="OrthoDB" id="9800696at2"/>
<dbReference type="GO" id="GO:0005737">
    <property type="term" value="C:cytoplasm"/>
    <property type="evidence" value="ECO:0007669"/>
    <property type="project" value="UniProtKB-SubCell"/>
</dbReference>
<dbReference type="GO" id="GO:0005524">
    <property type="term" value="F:ATP binding"/>
    <property type="evidence" value="ECO:0007669"/>
    <property type="project" value="UniProtKB-KW"/>
</dbReference>
<dbReference type="GO" id="GO:0000049">
    <property type="term" value="F:tRNA binding"/>
    <property type="evidence" value="ECO:0007669"/>
    <property type="project" value="UniProtKB-KW"/>
</dbReference>
<dbReference type="GO" id="GO:0103016">
    <property type="term" value="F:tRNA-uridine 2-sulfurtransferase activity"/>
    <property type="evidence" value="ECO:0007669"/>
    <property type="project" value="UniProtKB-EC"/>
</dbReference>
<dbReference type="GO" id="GO:0002143">
    <property type="term" value="P:tRNA wobble position uridine thiolation"/>
    <property type="evidence" value="ECO:0007669"/>
    <property type="project" value="TreeGrafter"/>
</dbReference>
<dbReference type="CDD" id="cd01998">
    <property type="entry name" value="MnmA_TRMU-like"/>
    <property type="match status" value="1"/>
</dbReference>
<dbReference type="FunFam" id="2.30.30.280:FF:000001">
    <property type="entry name" value="tRNA-specific 2-thiouridylase MnmA"/>
    <property type="match status" value="1"/>
</dbReference>
<dbReference type="FunFam" id="3.40.50.620:FF:000115">
    <property type="entry name" value="tRNA-specific 2-thiouridylase MnmA"/>
    <property type="match status" value="1"/>
</dbReference>
<dbReference type="Gene3D" id="2.30.30.280">
    <property type="entry name" value="Adenine nucleotide alpha hydrolases-like domains"/>
    <property type="match status" value="1"/>
</dbReference>
<dbReference type="Gene3D" id="3.40.50.620">
    <property type="entry name" value="HUPs"/>
    <property type="match status" value="1"/>
</dbReference>
<dbReference type="Gene3D" id="2.40.30.10">
    <property type="entry name" value="Translation factors"/>
    <property type="match status" value="1"/>
</dbReference>
<dbReference type="HAMAP" id="MF_00144">
    <property type="entry name" value="tRNA_thiouridyl_MnmA"/>
    <property type="match status" value="1"/>
</dbReference>
<dbReference type="InterPro" id="IPR004506">
    <property type="entry name" value="MnmA-like"/>
</dbReference>
<dbReference type="InterPro" id="IPR046885">
    <property type="entry name" value="MnmA-like_C"/>
</dbReference>
<dbReference type="InterPro" id="IPR046884">
    <property type="entry name" value="MnmA-like_central"/>
</dbReference>
<dbReference type="InterPro" id="IPR023382">
    <property type="entry name" value="MnmA-like_central_sf"/>
</dbReference>
<dbReference type="InterPro" id="IPR014729">
    <property type="entry name" value="Rossmann-like_a/b/a_fold"/>
</dbReference>
<dbReference type="NCBIfam" id="NF001138">
    <property type="entry name" value="PRK00143.1"/>
    <property type="match status" value="1"/>
</dbReference>
<dbReference type="NCBIfam" id="TIGR00420">
    <property type="entry name" value="trmU"/>
    <property type="match status" value="1"/>
</dbReference>
<dbReference type="PANTHER" id="PTHR11933:SF5">
    <property type="entry name" value="MITOCHONDRIAL TRNA-SPECIFIC 2-THIOURIDYLASE 1"/>
    <property type="match status" value="1"/>
</dbReference>
<dbReference type="PANTHER" id="PTHR11933">
    <property type="entry name" value="TRNA 5-METHYLAMINOMETHYL-2-THIOURIDYLATE -METHYLTRANSFERASE"/>
    <property type="match status" value="1"/>
</dbReference>
<dbReference type="Pfam" id="PF03054">
    <property type="entry name" value="tRNA_Me_trans"/>
    <property type="match status" value="1"/>
</dbReference>
<dbReference type="Pfam" id="PF20258">
    <property type="entry name" value="tRNA_Me_trans_C"/>
    <property type="match status" value="1"/>
</dbReference>
<dbReference type="Pfam" id="PF20259">
    <property type="entry name" value="tRNA_Me_trans_M"/>
    <property type="match status" value="1"/>
</dbReference>
<dbReference type="SUPFAM" id="SSF52402">
    <property type="entry name" value="Adenine nucleotide alpha hydrolases-like"/>
    <property type="match status" value="1"/>
</dbReference>
<name>MNMA_MOOTA</name>
<protein>
    <recommendedName>
        <fullName evidence="1">tRNA-specific 2-thiouridylase MnmA</fullName>
        <ecNumber evidence="1">2.8.1.13</ecNumber>
    </recommendedName>
</protein>
<keyword id="KW-0067">ATP-binding</keyword>
<keyword id="KW-0963">Cytoplasm</keyword>
<keyword id="KW-1015">Disulfide bond</keyword>
<keyword id="KW-0547">Nucleotide-binding</keyword>
<keyword id="KW-0694">RNA-binding</keyword>
<keyword id="KW-0808">Transferase</keyword>
<keyword id="KW-0819">tRNA processing</keyword>
<keyword id="KW-0820">tRNA-binding</keyword>
<gene>
    <name evidence="1" type="primary">mnmA</name>
    <name type="ordered locus">Moth_1650</name>
</gene>